<gene>
    <name evidence="1" type="primary">ahcY</name>
    <name type="ordered locus">XCV0856</name>
</gene>
<sequence>MNAVTKITPHTDYKIADISLADWGRKELDIAEHEMPGLMSIRRKHAQTKPLKDVRITGSLHMTIQTAVLIETLKDIGADVRWASCNIFSTQDHAAAAIAATGTPVFAWKGETLEEYWDCTLDALTFTLPDGTLTGPELVVDDGGDVTLLIHKGYELENGSTWVDEPASSHEEGVIKALLKRVAVERPGYWGRVVKDWKGVSEETTTGVHRLYQIAEAGKLLIPAINVNDSVTKSKFDNLYGCRESLADGLKRAMDVMLAGKVAVVCGYGDVGKGSAASLRAYGARVIVTEIDPICALQASMEGFEVNTIESTLGRADIYVTTTGNKDIITVEHLQAMKDQAIVCNIGHFDNEIQVDALKALKDVQKINIKPQVDKYVFPNGNAIFLLADGRLVNLGCATGHPSFVMSNSFANQTLAQIDLWEKRDTYEKKVYILPKHLDEEVARLHLEKIGVKLTTLTKDQADYLGVPVEGPFKPDHYRY</sequence>
<name>SAHH_XANE5</name>
<proteinExistence type="inferred from homology"/>
<reference key="1">
    <citation type="journal article" date="2005" name="J. Bacteriol.">
        <title>Insights into genome plasticity and pathogenicity of the plant pathogenic Bacterium Xanthomonas campestris pv. vesicatoria revealed by the complete genome sequence.</title>
        <authorList>
            <person name="Thieme F."/>
            <person name="Koebnik R."/>
            <person name="Bekel T."/>
            <person name="Berger C."/>
            <person name="Boch J."/>
            <person name="Buettner D."/>
            <person name="Caldana C."/>
            <person name="Gaigalat L."/>
            <person name="Goesmann A."/>
            <person name="Kay S."/>
            <person name="Kirchner O."/>
            <person name="Lanz C."/>
            <person name="Linke B."/>
            <person name="McHardy A.C."/>
            <person name="Meyer F."/>
            <person name="Mittenhuber G."/>
            <person name="Nies D.H."/>
            <person name="Niesbach-Kloesgen U."/>
            <person name="Patschkowski T."/>
            <person name="Rueckert C."/>
            <person name="Rupp O."/>
            <person name="Schneiker S."/>
            <person name="Schuster S.C."/>
            <person name="Vorhoelter F.J."/>
            <person name="Weber E."/>
            <person name="Puehler A."/>
            <person name="Bonas U."/>
            <person name="Bartels D."/>
            <person name="Kaiser O."/>
        </authorList>
    </citation>
    <scope>NUCLEOTIDE SEQUENCE [LARGE SCALE GENOMIC DNA]</scope>
    <source>
        <strain>85-10</strain>
    </source>
</reference>
<organism>
    <name type="scientific">Xanthomonas euvesicatoria pv. vesicatoria (strain 85-10)</name>
    <name type="common">Xanthomonas campestris pv. vesicatoria</name>
    <dbReference type="NCBI Taxonomy" id="316273"/>
    <lineage>
        <taxon>Bacteria</taxon>
        <taxon>Pseudomonadati</taxon>
        <taxon>Pseudomonadota</taxon>
        <taxon>Gammaproteobacteria</taxon>
        <taxon>Lysobacterales</taxon>
        <taxon>Lysobacteraceae</taxon>
        <taxon>Xanthomonas</taxon>
    </lineage>
</organism>
<feature type="chain" id="PRO_1000024764" description="Adenosylhomocysteinase">
    <location>
        <begin position="1"/>
        <end position="480"/>
    </location>
</feature>
<feature type="binding site" evidence="1">
    <location>
        <position position="63"/>
    </location>
    <ligand>
        <name>substrate</name>
    </ligand>
</feature>
<feature type="binding site" evidence="1">
    <location>
        <position position="142"/>
    </location>
    <ligand>
        <name>substrate</name>
    </ligand>
</feature>
<feature type="binding site" evidence="1">
    <location>
        <position position="203"/>
    </location>
    <ligand>
        <name>substrate</name>
    </ligand>
</feature>
<feature type="binding site" evidence="1">
    <location>
        <begin position="204"/>
        <end position="206"/>
    </location>
    <ligand>
        <name>NAD(+)</name>
        <dbReference type="ChEBI" id="CHEBI:57540"/>
    </ligand>
</feature>
<feature type="binding site" evidence="1">
    <location>
        <position position="233"/>
    </location>
    <ligand>
        <name>substrate</name>
    </ligand>
</feature>
<feature type="binding site" evidence="1">
    <location>
        <position position="237"/>
    </location>
    <ligand>
        <name>substrate</name>
    </ligand>
</feature>
<feature type="binding site" evidence="1">
    <location>
        <position position="238"/>
    </location>
    <ligand>
        <name>NAD(+)</name>
        <dbReference type="ChEBI" id="CHEBI:57540"/>
    </ligand>
</feature>
<feature type="binding site" evidence="1">
    <location>
        <begin position="267"/>
        <end position="272"/>
    </location>
    <ligand>
        <name>NAD(+)</name>
        <dbReference type="ChEBI" id="CHEBI:57540"/>
    </ligand>
</feature>
<feature type="binding site" evidence="1">
    <location>
        <position position="290"/>
    </location>
    <ligand>
        <name>NAD(+)</name>
        <dbReference type="ChEBI" id="CHEBI:57540"/>
    </ligand>
</feature>
<feature type="binding site" evidence="1">
    <location>
        <position position="325"/>
    </location>
    <ligand>
        <name>NAD(+)</name>
        <dbReference type="ChEBI" id="CHEBI:57540"/>
    </ligand>
</feature>
<feature type="binding site" evidence="1">
    <location>
        <begin position="346"/>
        <end position="348"/>
    </location>
    <ligand>
        <name>NAD(+)</name>
        <dbReference type="ChEBI" id="CHEBI:57540"/>
    </ligand>
</feature>
<feature type="binding site" evidence="1">
    <location>
        <position position="394"/>
    </location>
    <ligand>
        <name>NAD(+)</name>
        <dbReference type="ChEBI" id="CHEBI:57540"/>
    </ligand>
</feature>
<dbReference type="EC" id="3.13.2.1" evidence="1"/>
<dbReference type="EMBL" id="AM039952">
    <property type="protein sequence ID" value="CAJ22487.1"/>
    <property type="molecule type" value="Genomic_DNA"/>
</dbReference>
<dbReference type="RefSeq" id="WP_011346442.1">
    <property type="nucleotide sequence ID" value="NZ_CP017190.1"/>
</dbReference>
<dbReference type="SMR" id="Q3BXC6"/>
<dbReference type="STRING" id="456327.BJD11_18510"/>
<dbReference type="GeneID" id="63990096"/>
<dbReference type="KEGG" id="xcv:XCV0856"/>
<dbReference type="eggNOG" id="COG0499">
    <property type="taxonomic scope" value="Bacteria"/>
</dbReference>
<dbReference type="HOGENOM" id="CLU_025194_2_1_6"/>
<dbReference type="UniPathway" id="UPA00314">
    <property type="reaction ID" value="UER00076"/>
</dbReference>
<dbReference type="Proteomes" id="UP000007069">
    <property type="component" value="Chromosome"/>
</dbReference>
<dbReference type="GO" id="GO:0005829">
    <property type="term" value="C:cytosol"/>
    <property type="evidence" value="ECO:0007669"/>
    <property type="project" value="TreeGrafter"/>
</dbReference>
<dbReference type="GO" id="GO:0004013">
    <property type="term" value="F:adenosylhomocysteinase activity"/>
    <property type="evidence" value="ECO:0007669"/>
    <property type="project" value="UniProtKB-UniRule"/>
</dbReference>
<dbReference type="GO" id="GO:0071269">
    <property type="term" value="P:L-homocysteine biosynthetic process"/>
    <property type="evidence" value="ECO:0007669"/>
    <property type="project" value="UniProtKB-UniRule"/>
</dbReference>
<dbReference type="GO" id="GO:0006730">
    <property type="term" value="P:one-carbon metabolic process"/>
    <property type="evidence" value="ECO:0007669"/>
    <property type="project" value="UniProtKB-KW"/>
</dbReference>
<dbReference type="GO" id="GO:0033353">
    <property type="term" value="P:S-adenosylmethionine cycle"/>
    <property type="evidence" value="ECO:0007669"/>
    <property type="project" value="TreeGrafter"/>
</dbReference>
<dbReference type="CDD" id="cd00401">
    <property type="entry name" value="SAHH"/>
    <property type="match status" value="1"/>
</dbReference>
<dbReference type="FunFam" id="3.40.50.720:FF:000004">
    <property type="entry name" value="Adenosylhomocysteinase"/>
    <property type="match status" value="1"/>
</dbReference>
<dbReference type="Gene3D" id="3.40.50.1480">
    <property type="entry name" value="Adenosylhomocysteinase-like"/>
    <property type="match status" value="1"/>
</dbReference>
<dbReference type="Gene3D" id="3.40.50.720">
    <property type="entry name" value="NAD(P)-binding Rossmann-like Domain"/>
    <property type="match status" value="1"/>
</dbReference>
<dbReference type="HAMAP" id="MF_00563">
    <property type="entry name" value="AdoHcyase"/>
    <property type="match status" value="1"/>
</dbReference>
<dbReference type="InterPro" id="IPR042172">
    <property type="entry name" value="Adenosylhomocyst_ase-like_sf"/>
</dbReference>
<dbReference type="InterPro" id="IPR000043">
    <property type="entry name" value="Adenosylhomocysteinase-like"/>
</dbReference>
<dbReference type="InterPro" id="IPR015878">
    <property type="entry name" value="Ado_hCys_hydrolase_NAD-bd"/>
</dbReference>
<dbReference type="InterPro" id="IPR036291">
    <property type="entry name" value="NAD(P)-bd_dom_sf"/>
</dbReference>
<dbReference type="InterPro" id="IPR020082">
    <property type="entry name" value="S-Ado-L-homoCys_hydrolase_CS"/>
</dbReference>
<dbReference type="NCBIfam" id="TIGR00936">
    <property type="entry name" value="ahcY"/>
    <property type="match status" value="1"/>
</dbReference>
<dbReference type="NCBIfam" id="NF004005">
    <property type="entry name" value="PRK05476.2-3"/>
    <property type="match status" value="1"/>
</dbReference>
<dbReference type="PANTHER" id="PTHR23420">
    <property type="entry name" value="ADENOSYLHOMOCYSTEINASE"/>
    <property type="match status" value="1"/>
</dbReference>
<dbReference type="PANTHER" id="PTHR23420:SF0">
    <property type="entry name" value="ADENOSYLHOMOCYSTEINASE"/>
    <property type="match status" value="1"/>
</dbReference>
<dbReference type="Pfam" id="PF05221">
    <property type="entry name" value="AdoHcyase"/>
    <property type="match status" value="1"/>
</dbReference>
<dbReference type="Pfam" id="PF00670">
    <property type="entry name" value="AdoHcyase_NAD"/>
    <property type="match status" value="1"/>
</dbReference>
<dbReference type="PIRSF" id="PIRSF001109">
    <property type="entry name" value="Ad_hcy_hydrolase"/>
    <property type="match status" value="1"/>
</dbReference>
<dbReference type="SMART" id="SM00996">
    <property type="entry name" value="AdoHcyase"/>
    <property type="match status" value="1"/>
</dbReference>
<dbReference type="SMART" id="SM00997">
    <property type="entry name" value="AdoHcyase_NAD"/>
    <property type="match status" value="1"/>
</dbReference>
<dbReference type="SUPFAM" id="SSF52283">
    <property type="entry name" value="Formate/glycerate dehydrogenase catalytic domain-like"/>
    <property type="match status" value="1"/>
</dbReference>
<dbReference type="SUPFAM" id="SSF51735">
    <property type="entry name" value="NAD(P)-binding Rossmann-fold domains"/>
    <property type="match status" value="1"/>
</dbReference>
<dbReference type="PROSITE" id="PS00738">
    <property type="entry name" value="ADOHCYASE_1"/>
    <property type="match status" value="1"/>
</dbReference>
<dbReference type="PROSITE" id="PS00739">
    <property type="entry name" value="ADOHCYASE_2"/>
    <property type="match status" value="1"/>
</dbReference>
<comment type="function">
    <text evidence="1">May play a key role in the regulation of the intracellular concentration of adenosylhomocysteine.</text>
</comment>
<comment type="catalytic activity">
    <reaction evidence="1">
        <text>S-adenosyl-L-homocysteine + H2O = L-homocysteine + adenosine</text>
        <dbReference type="Rhea" id="RHEA:21708"/>
        <dbReference type="ChEBI" id="CHEBI:15377"/>
        <dbReference type="ChEBI" id="CHEBI:16335"/>
        <dbReference type="ChEBI" id="CHEBI:57856"/>
        <dbReference type="ChEBI" id="CHEBI:58199"/>
        <dbReference type="EC" id="3.13.2.1"/>
    </reaction>
</comment>
<comment type="cofactor">
    <cofactor evidence="1">
        <name>NAD(+)</name>
        <dbReference type="ChEBI" id="CHEBI:57540"/>
    </cofactor>
    <text evidence="1">Binds 1 NAD(+) per subunit.</text>
</comment>
<comment type="pathway">
    <text evidence="1">Amino-acid biosynthesis; L-homocysteine biosynthesis; L-homocysteine from S-adenosyl-L-homocysteine: step 1/1.</text>
</comment>
<comment type="subcellular location">
    <subcellularLocation>
        <location evidence="1">Cytoplasm</location>
    </subcellularLocation>
</comment>
<comment type="similarity">
    <text evidence="1">Belongs to the adenosylhomocysteinase family.</text>
</comment>
<keyword id="KW-0963">Cytoplasm</keyword>
<keyword id="KW-0378">Hydrolase</keyword>
<keyword id="KW-0520">NAD</keyword>
<keyword id="KW-0554">One-carbon metabolism</keyword>
<accession>Q3BXC6</accession>
<protein>
    <recommendedName>
        <fullName evidence="1">Adenosylhomocysteinase</fullName>
        <ecNumber evidence="1">3.13.2.1</ecNumber>
    </recommendedName>
    <alternativeName>
        <fullName evidence="1">S-adenosyl-L-homocysteine hydrolase</fullName>
        <shortName evidence="1">AdoHcyase</shortName>
    </alternativeName>
</protein>
<evidence type="ECO:0000255" key="1">
    <source>
        <dbReference type="HAMAP-Rule" id="MF_00563"/>
    </source>
</evidence>